<gene>
    <name type="primary">ESRRG</name>
    <name type="synonym">ERR3</name>
    <name type="synonym">NR3B3</name>
</gene>
<comment type="function">
    <text evidence="1">Orphan receptor that acts as a transcription activator in the absence of bound ligand. Binds specifically to an estrogen response element and activates reporter genes controlled by estrogen response elements. Induces the expression of PERM1 in the skeletal muscle (By similarity).</text>
</comment>
<comment type="subunit">
    <text evidence="1">Homodimer. Interacts with NRIP1, NCOA1 and NCOR2. Binds TLE1, PNRC1 and PNRC2. Binds GRIP1 (By similarity).</text>
</comment>
<comment type="subcellular location">
    <subcellularLocation>
        <location evidence="5">Nucleus</location>
    </subcellularLocation>
</comment>
<comment type="PTM">
    <text evidence="1">Acetylated by PCAF/KAT2 (in vitro).</text>
</comment>
<comment type="miscellaneous">
    <text evidence="1">No physiological activating ligand is known for this orphan receptor, but 4-hydroxytamoxifen and diethylstilbestrol act as inverse agonists and deactivate ESRRG.</text>
</comment>
<comment type="similarity">
    <text evidence="5">Belongs to the nuclear hormone receptor family. NR3 subfamily.</text>
</comment>
<proteinExistence type="evidence at transcript level"/>
<organism>
    <name type="scientific">Pongo abelii</name>
    <name type="common">Sumatran orangutan</name>
    <name type="synonym">Pongo pygmaeus abelii</name>
    <dbReference type="NCBI Taxonomy" id="9601"/>
    <lineage>
        <taxon>Eukaryota</taxon>
        <taxon>Metazoa</taxon>
        <taxon>Chordata</taxon>
        <taxon>Craniata</taxon>
        <taxon>Vertebrata</taxon>
        <taxon>Euteleostomi</taxon>
        <taxon>Mammalia</taxon>
        <taxon>Eutheria</taxon>
        <taxon>Euarchontoglires</taxon>
        <taxon>Primates</taxon>
        <taxon>Haplorrhini</taxon>
        <taxon>Catarrhini</taxon>
        <taxon>Hominidae</taxon>
        <taxon>Pongo</taxon>
    </lineage>
</organism>
<evidence type="ECO:0000250" key="1"/>
<evidence type="ECO:0000255" key="2">
    <source>
        <dbReference type="PROSITE-ProRule" id="PRU00407"/>
    </source>
</evidence>
<evidence type="ECO:0000255" key="3">
    <source>
        <dbReference type="PROSITE-ProRule" id="PRU01189"/>
    </source>
</evidence>
<evidence type="ECO:0000256" key="4">
    <source>
        <dbReference type="SAM" id="MobiDB-lite"/>
    </source>
</evidence>
<evidence type="ECO:0000305" key="5"/>
<keyword id="KW-0007">Acetylation</keyword>
<keyword id="KW-0010">Activator</keyword>
<keyword id="KW-0238">DNA-binding</keyword>
<keyword id="KW-0479">Metal-binding</keyword>
<keyword id="KW-0539">Nucleus</keyword>
<keyword id="KW-0675">Receptor</keyword>
<keyword id="KW-1185">Reference proteome</keyword>
<keyword id="KW-0804">Transcription</keyword>
<keyword id="KW-0805">Transcription regulation</keyword>
<keyword id="KW-0862">Zinc</keyword>
<keyword id="KW-0863">Zinc-finger</keyword>
<protein>
    <recommendedName>
        <fullName>Estrogen-related receptor gamma</fullName>
    </recommendedName>
    <alternativeName>
        <fullName>Estrogen receptor-related protein 3</fullName>
    </alternativeName>
    <alternativeName>
        <fullName>Nuclear receptor subfamily 3 group B member 3</fullName>
    </alternativeName>
</protein>
<name>ERR3_PONAB</name>
<reference key="1">
    <citation type="submission" date="2004-11" db="EMBL/GenBank/DDBJ databases">
        <authorList>
            <consortium name="The German cDNA consortium"/>
        </authorList>
    </citation>
    <scope>NUCLEOTIDE SEQUENCE [LARGE SCALE MRNA]</scope>
    <source>
        <tissue>Brain cortex</tissue>
    </source>
</reference>
<dbReference type="EMBL" id="CR858993">
    <property type="protein sequence ID" value="CAH91188.1"/>
    <property type="molecule type" value="mRNA"/>
</dbReference>
<dbReference type="RefSeq" id="NP_001125696.1">
    <property type="nucleotide sequence ID" value="NM_001132224.1"/>
</dbReference>
<dbReference type="SMR" id="Q5RAM2"/>
<dbReference type="STRING" id="9601.ENSPPYP00000000224"/>
<dbReference type="GeneID" id="100172620"/>
<dbReference type="KEGG" id="pon:100172620"/>
<dbReference type="CTD" id="2104"/>
<dbReference type="eggNOG" id="KOG3575">
    <property type="taxonomic scope" value="Eukaryota"/>
</dbReference>
<dbReference type="InParanoid" id="Q5RAM2"/>
<dbReference type="OrthoDB" id="5799427at2759"/>
<dbReference type="Proteomes" id="UP000001595">
    <property type="component" value="Unplaced"/>
</dbReference>
<dbReference type="GO" id="GO:0005654">
    <property type="term" value="C:nucleoplasm"/>
    <property type="evidence" value="ECO:0007669"/>
    <property type="project" value="UniProtKB-ARBA"/>
</dbReference>
<dbReference type="GO" id="GO:0003707">
    <property type="term" value="F:nuclear steroid receptor activity"/>
    <property type="evidence" value="ECO:0007669"/>
    <property type="project" value="InterPro"/>
</dbReference>
<dbReference type="GO" id="GO:1990837">
    <property type="term" value="F:sequence-specific double-stranded DNA binding"/>
    <property type="evidence" value="ECO:0007669"/>
    <property type="project" value="UniProtKB-ARBA"/>
</dbReference>
<dbReference type="GO" id="GO:0005496">
    <property type="term" value="F:steroid binding"/>
    <property type="evidence" value="ECO:0007669"/>
    <property type="project" value="InterPro"/>
</dbReference>
<dbReference type="GO" id="GO:0008270">
    <property type="term" value="F:zinc ion binding"/>
    <property type="evidence" value="ECO:0007669"/>
    <property type="project" value="UniProtKB-KW"/>
</dbReference>
<dbReference type="GO" id="GO:0006355">
    <property type="term" value="P:regulation of DNA-templated transcription"/>
    <property type="evidence" value="ECO:0000250"/>
    <property type="project" value="UniProtKB"/>
</dbReference>
<dbReference type="GO" id="GO:0048384">
    <property type="term" value="P:retinoic acid receptor signaling pathway"/>
    <property type="evidence" value="ECO:0007669"/>
    <property type="project" value="InterPro"/>
</dbReference>
<dbReference type="CDD" id="cd07170">
    <property type="entry name" value="NR_DBD_ERR"/>
    <property type="match status" value="1"/>
</dbReference>
<dbReference type="CDD" id="cd06946">
    <property type="entry name" value="NR_LBD_ERR"/>
    <property type="match status" value="1"/>
</dbReference>
<dbReference type="FunFam" id="1.10.565.10:FF:000009">
    <property type="entry name" value="estrogen-related receptor gamma isoform X1"/>
    <property type="match status" value="1"/>
</dbReference>
<dbReference type="FunFam" id="3.30.50.10:FF:000008">
    <property type="entry name" value="estrogen-related receptor gamma isoform X1"/>
    <property type="match status" value="1"/>
</dbReference>
<dbReference type="Gene3D" id="3.30.50.10">
    <property type="entry name" value="Erythroid Transcription Factor GATA-1, subunit A"/>
    <property type="match status" value="1"/>
</dbReference>
<dbReference type="Gene3D" id="1.10.565.10">
    <property type="entry name" value="Retinoid X Receptor"/>
    <property type="match status" value="1"/>
</dbReference>
<dbReference type="InterPro" id="IPR024178">
    <property type="entry name" value="Est_rcpt/est-rel_rcp"/>
</dbReference>
<dbReference type="InterPro" id="IPR035500">
    <property type="entry name" value="NHR-like_dom_sf"/>
</dbReference>
<dbReference type="InterPro" id="IPR000536">
    <property type="entry name" value="Nucl_hrmn_rcpt_lig-bd"/>
</dbReference>
<dbReference type="InterPro" id="IPR050200">
    <property type="entry name" value="Nuclear_hormone_rcpt_NR3"/>
</dbReference>
<dbReference type="InterPro" id="IPR001723">
    <property type="entry name" value="Nuclear_hrmn_rcpt"/>
</dbReference>
<dbReference type="InterPro" id="IPR027289">
    <property type="entry name" value="Oest-rel_rcp"/>
</dbReference>
<dbReference type="InterPro" id="IPR003078">
    <property type="entry name" value="Retinoic_acid_rcpt"/>
</dbReference>
<dbReference type="InterPro" id="IPR001628">
    <property type="entry name" value="Znf_hrmn_rcpt"/>
</dbReference>
<dbReference type="InterPro" id="IPR013088">
    <property type="entry name" value="Znf_NHR/GATA"/>
</dbReference>
<dbReference type="PANTHER" id="PTHR48092">
    <property type="entry name" value="KNIRPS-RELATED PROTEIN-RELATED"/>
    <property type="match status" value="1"/>
</dbReference>
<dbReference type="Pfam" id="PF00104">
    <property type="entry name" value="Hormone_recep"/>
    <property type="match status" value="1"/>
</dbReference>
<dbReference type="Pfam" id="PF00105">
    <property type="entry name" value="zf-C4"/>
    <property type="match status" value="1"/>
</dbReference>
<dbReference type="PIRSF" id="PIRSF002527">
    <property type="entry name" value="ER-like_NR"/>
    <property type="match status" value="1"/>
</dbReference>
<dbReference type="PIRSF" id="PIRSF500939">
    <property type="entry name" value="ERR1-2-3"/>
    <property type="match status" value="1"/>
</dbReference>
<dbReference type="PRINTS" id="PR01292">
    <property type="entry name" value="RETNOICACIDR"/>
</dbReference>
<dbReference type="PRINTS" id="PR00398">
    <property type="entry name" value="STRDHORMONER"/>
</dbReference>
<dbReference type="PRINTS" id="PR00047">
    <property type="entry name" value="STROIDFINGER"/>
</dbReference>
<dbReference type="SMART" id="SM00430">
    <property type="entry name" value="HOLI"/>
    <property type="match status" value="1"/>
</dbReference>
<dbReference type="SMART" id="SM00399">
    <property type="entry name" value="ZnF_C4"/>
    <property type="match status" value="1"/>
</dbReference>
<dbReference type="SUPFAM" id="SSF57716">
    <property type="entry name" value="Glucocorticoid receptor-like (DNA-binding domain)"/>
    <property type="match status" value="1"/>
</dbReference>
<dbReference type="SUPFAM" id="SSF48508">
    <property type="entry name" value="Nuclear receptor ligand-binding domain"/>
    <property type="match status" value="1"/>
</dbReference>
<dbReference type="PROSITE" id="PS51843">
    <property type="entry name" value="NR_LBD"/>
    <property type="match status" value="1"/>
</dbReference>
<dbReference type="PROSITE" id="PS00031">
    <property type="entry name" value="NUCLEAR_REC_DBD_1"/>
    <property type="match status" value="1"/>
</dbReference>
<dbReference type="PROSITE" id="PS51030">
    <property type="entry name" value="NUCLEAR_REC_DBD_2"/>
    <property type="match status" value="1"/>
</dbReference>
<feature type="chain" id="PRO_0000053667" description="Estrogen-related receptor gamma">
    <location>
        <begin position="1"/>
        <end position="435"/>
    </location>
</feature>
<feature type="domain" description="NR LBD" evidence="3">
    <location>
        <begin position="210"/>
        <end position="434"/>
    </location>
</feature>
<feature type="DNA-binding region" description="Nuclear receptor" evidence="2">
    <location>
        <begin position="102"/>
        <end position="177"/>
    </location>
</feature>
<feature type="zinc finger region" description="NR C4-type" evidence="2">
    <location>
        <begin position="105"/>
        <end position="125"/>
    </location>
</feature>
<feature type="zinc finger region" description="NR C4-type" evidence="2">
    <location>
        <begin position="141"/>
        <end position="160"/>
    </location>
</feature>
<feature type="region of interest" description="Disordered" evidence="4">
    <location>
        <begin position="1"/>
        <end position="64"/>
    </location>
</feature>
<feature type="compositionally biased region" description="Polar residues" evidence="4">
    <location>
        <begin position="10"/>
        <end position="29"/>
    </location>
</feature>
<feature type="compositionally biased region" description="Low complexity" evidence="4">
    <location>
        <begin position="34"/>
        <end position="47"/>
    </location>
</feature>
<accession>Q5RAM2</accession>
<sequence>MSNKDRHIDSSCSSFIKTEPSSPASLTDSVNHHSPGGSSDASGSYSSTMNGHQNGLDSPPLYPSAPILGGSGPVRKLYDDCSSTIVEDPQTKCEYMLNSMPKRLCLVCGDIASGYHYGVASCEACKAFFKRTIQGNIEYSCPATNECEITKRRRKSCQACRFMKCLKVGMLKEGVRLDRVRGGRQKYKRRIDAENSPYLNPQLVQPAKKPYNKIVSHLLVAEPEKIYAMPDPTVPDSDIKALTTLCDLADRELVVIIGWAKHIPGFSTLSLADQMSLLQSAWMEILILGVVYRSLSFEDELVYADDYIMDEDQSKLAGLLDLNNAILQLVKKYKSMKLEKEEFVTLKAIALANSDSMHIEDVEAVQKLQDVLHEALQDYEAGQHMEDPRRAGKMLMTLPLLRQTSTKAVQHFYNIKLEGKVPMHKLFSEMLEAKV</sequence>